<feature type="chain" id="PRO_0000089492" description="Centrosomal protein of 135 kDa">
    <location>
        <begin position="1"/>
        <end position="1140"/>
    </location>
</feature>
<feature type="region of interest" description="Homodimerization" evidence="1">
    <location>
        <begin position="11"/>
        <end position="64"/>
    </location>
</feature>
<feature type="region of interest" description="Disordered" evidence="3">
    <location>
        <begin position="1117"/>
        <end position="1140"/>
    </location>
</feature>
<feature type="coiled-coil region" evidence="2">
    <location>
        <begin position="75"/>
        <end position="151"/>
    </location>
</feature>
<feature type="coiled-coil region" evidence="2">
    <location>
        <begin position="199"/>
        <end position="416"/>
    </location>
</feature>
<feature type="coiled-coil region" evidence="2">
    <location>
        <begin position="447"/>
        <end position="644"/>
    </location>
</feature>
<feature type="coiled-coil region" evidence="2">
    <location>
        <begin position="668"/>
        <end position="1036"/>
    </location>
</feature>
<feature type="coiled-coil region" evidence="2">
    <location>
        <begin position="1079"/>
        <end position="1113"/>
    </location>
</feature>
<feature type="compositionally biased region" description="Low complexity" evidence="3">
    <location>
        <begin position="1117"/>
        <end position="1131"/>
    </location>
</feature>
<feature type="site" description="Microtubule binding" evidence="1">
    <location>
        <position position="101"/>
    </location>
</feature>
<feature type="site" description="Microtubule binding" evidence="1">
    <location>
        <position position="104"/>
    </location>
</feature>
<feature type="site" description="Microtubule binding" evidence="1">
    <location>
        <position position="108"/>
    </location>
</feature>
<feature type="modified residue" description="Phosphoserine" evidence="1">
    <location>
        <position position="439"/>
    </location>
</feature>
<feature type="modified residue" description="Phosphoserine" evidence="1">
    <location>
        <position position="688"/>
    </location>
</feature>
<feature type="modified residue" description="Phosphothreonine" evidence="1">
    <location>
        <position position="1121"/>
    </location>
</feature>
<feature type="modified residue" description="Phosphoserine" evidence="7">
    <location>
        <position position="1130"/>
    </location>
</feature>
<feature type="modified residue" description="Phosphothreonine" evidence="7">
    <location>
        <position position="1134"/>
    </location>
</feature>
<feature type="disulfide bond" description="Interchain" evidence="1">
    <location>
        <position position="110"/>
    </location>
</feature>
<protein>
    <recommendedName>
        <fullName>Centrosomal protein of 135 kDa</fullName>
        <shortName>Cep135</shortName>
    </recommendedName>
    <alternativeName>
        <fullName>Centrosomal protein 4</fullName>
    </alternativeName>
</protein>
<organism>
    <name type="scientific">Mus musculus</name>
    <name type="common">Mouse</name>
    <dbReference type="NCBI Taxonomy" id="10090"/>
    <lineage>
        <taxon>Eukaryota</taxon>
        <taxon>Metazoa</taxon>
        <taxon>Chordata</taxon>
        <taxon>Craniata</taxon>
        <taxon>Vertebrata</taxon>
        <taxon>Euteleostomi</taxon>
        <taxon>Mammalia</taxon>
        <taxon>Eutheria</taxon>
        <taxon>Euarchontoglires</taxon>
        <taxon>Glires</taxon>
        <taxon>Rodentia</taxon>
        <taxon>Myomorpha</taxon>
        <taxon>Muroidea</taxon>
        <taxon>Muridae</taxon>
        <taxon>Murinae</taxon>
        <taxon>Mus</taxon>
        <taxon>Mus</taxon>
    </lineage>
</organism>
<dbReference type="EMBL" id="BC062951">
    <property type="protein sequence ID" value="AAH62951.1"/>
    <property type="molecule type" value="mRNA"/>
</dbReference>
<dbReference type="EMBL" id="AK172988">
    <property type="protein sequence ID" value="BAD32266.1"/>
    <property type="molecule type" value="mRNA"/>
</dbReference>
<dbReference type="CCDS" id="CCDS19365.1"/>
<dbReference type="RefSeq" id="NP_950197.1">
    <property type="nucleotide sequence ID" value="NM_199032.4"/>
</dbReference>
<dbReference type="RefSeq" id="XP_006535086.1">
    <property type="nucleotide sequence ID" value="XM_006535023.3"/>
</dbReference>
<dbReference type="SMR" id="Q6P5D4"/>
<dbReference type="BioGRID" id="238025">
    <property type="interactions" value="73"/>
</dbReference>
<dbReference type="FunCoup" id="Q6P5D4">
    <property type="interactions" value="2098"/>
</dbReference>
<dbReference type="IntAct" id="Q6P5D4">
    <property type="interactions" value="68"/>
</dbReference>
<dbReference type="STRING" id="10090.ENSMUSP00000112602"/>
<dbReference type="iPTMnet" id="Q6P5D4"/>
<dbReference type="PhosphoSitePlus" id="Q6P5D4"/>
<dbReference type="jPOST" id="Q6P5D4"/>
<dbReference type="PaxDb" id="10090-ENSMUSP00000112602"/>
<dbReference type="ProteomicsDB" id="283435"/>
<dbReference type="Pumba" id="Q6P5D4"/>
<dbReference type="Antibodypedia" id="23978">
    <property type="antibodies" value="147 antibodies from 23 providers"/>
</dbReference>
<dbReference type="DNASU" id="381644"/>
<dbReference type="Ensembl" id="ENSMUST00000049060.8">
    <property type="protein sequence ID" value="ENSMUSP00000038674.8"/>
    <property type="gene ID" value="ENSMUSG00000036403.16"/>
</dbReference>
<dbReference type="Ensembl" id="ENSMUST00000121979.8">
    <property type="protein sequence ID" value="ENSMUSP00000112602.2"/>
    <property type="gene ID" value="ENSMUSG00000036403.16"/>
</dbReference>
<dbReference type="GeneID" id="381644"/>
<dbReference type="KEGG" id="mmu:381644"/>
<dbReference type="UCSC" id="uc008xvc.1">
    <property type="organism name" value="mouse"/>
</dbReference>
<dbReference type="AGR" id="MGI:2681869"/>
<dbReference type="CTD" id="9662"/>
<dbReference type="MGI" id="MGI:2681869">
    <property type="gene designation" value="Cep135"/>
</dbReference>
<dbReference type="VEuPathDB" id="HostDB:ENSMUSG00000036403"/>
<dbReference type="eggNOG" id="ENOG502QT27">
    <property type="taxonomic scope" value="Eukaryota"/>
</dbReference>
<dbReference type="GeneTree" id="ENSGT00940000159453"/>
<dbReference type="HOGENOM" id="CLU_008607_0_0_1"/>
<dbReference type="InParanoid" id="Q6P5D4"/>
<dbReference type="OMA" id="QGRENTM"/>
<dbReference type="OrthoDB" id="10254663at2759"/>
<dbReference type="PhylomeDB" id="Q6P5D4"/>
<dbReference type="TreeFam" id="TF326518"/>
<dbReference type="Reactome" id="R-MMU-2565942">
    <property type="pathway name" value="Regulation of PLK1 Activity at G2/M Transition"/>
</dbReference>
<dbReference type="Reactome" id="R-MMU-380259">
    <property type="pathway name" value="Loss of Nlp from mitotic centrosomes"/>
</dbReference>
<dbReference type="Reactome" id="R-MMU-380270">
    <property type="pathway name" value="Recruitment of mitotic centrosome proteins and complexes"/>
</dbReference>
<dbReference type="Reactome" id="R-MMU-380284">
    <property type="pathway name" value="Loss of proteins required for interphase microtubule organization from the centrosome"/>
</dbReference>
<dbReference type="Reactome" id="R-MMU-380320">
    <property type="pathway name" value="Recruitment of NuMA to mitotic centrosomes"/>
</dbReference>
<dbReference type="Reactome" id="R-MMU-5620912">
    <property type="pathway name" value="Anchoring of the basal body to the plasma membrane"/>
</dbReference>
<dbReference type="Reactome" id="R-MMU-8854518">
    <property type="pathway name" value="AURKA Activation by TPX2"/>
</dbReference>
<dbReference type="BioGRID-ORCS" id="381644">
    <property type="hits" value="3 hits in 78 CRISPR screens"/>
</dbReference>
<dbReference type="CD-CODE" id="01CA17F3">
    <property type="entry name" value="Centrosome"/>
</dbReference>
<dbReference type="ChiTaRS" id="Cep135">
    <property type="organism name" value="mouse"/>
</dbReference>
<dbReference type="PRO" id="PR:Q6P5D4"/>
<dbReference type="Proteomes" id="UP000000589">
    <property type="component" value="Chromosome 5"/>
</dbReference>
<dbReference type="RNAct" id="Q6P5D4">
    <property type="molecule type" value="protein"/>
</dbReference>
<dbReference type="Bgee" id="ENSMUSG00000036403">
    <property type="expression patterns" value="Expressed in animal zygote and 96 other cell types or tissues"/>
</dbReference>
<dbReference type="GO" id="GO:0005814">
    <property type="term" value="C:centriole"/>
    <property type="evidence" value="ECO:0000250"/>
    <property type="project" value="UniProtKB"/>
</dbReference>
<dbReference type="GO" id="GO:0005813">
    <property type="term" value="C:centrosome"/>
    <property type="evidence" value="ECO:0007669"/>
    <property type="project" value="Ensembl"/>
</dbReference>
<dbReference type="GO" id="GO:0005737">
    <property type="term" value="C:cytoplasm"/>
    <property type="evidence" value="ECO:0007669"/>
    <property type="project" value="UniProtKB-KW"/>
</dbReference>
<dbReference type="GO" id="GO:0008017">
    <property type="term" value="F:microtubule binding"/>
    <property type="evidence" value="ECO:0007669"/>
    <property type="project" value="Ensembl"/>
</dbReference>
<dbReference type="GO" id="GO:0042803">
    <property type="term" value="F:protein homodimerization activity"/>
    <property type="evidence" value="ECO:0007669"/>
    <property type="project" value="Ensembl"/>
</dbReference>
<dbReference type="GO" id="GO:0007099">
    <property type="term" value="P:centriole replication"/>
    <property type="evidence" value="ECO:0007669"/>
    <property type="project" value="Ensembl"/>
</dbReference>
<dbReference type="GO" id="GO:0010457">
    <property type="term" value="P:centriole-centriole cohesion"/>
    <property type="evidence" value="ECO:0007669"/>
    <property type="project" value="Ensembl"/>
</dbReference>
<dbReference type="GO" id="GO:1904951">
    <property type="term" value="P:positive regulation of establishment of protein localization"/>
    <property type="evidence" value="ECO:0000250"/>
    <property type="project" value="UniProtKB"/>
</dbReference>
<dbReference type="GO" id="GO:1902857">
    <property type="term" value="P:positive regulation of non-motile cilium assembly"/>
    <property type="evidence" value="ECO:0000250"/>
    <property type="project" value="UniProtKB"/>
</dbReference>
<dbReference type="CDD" id="cd22292">
    <property type="entry name" value="cc_Cep135_MBD"/>
    <property type="match status" value="1"/>
</dbReference>
<dbReference type="Gene3D" id="1.10.287.1490">
    <property type="match status" value="1"/>
</dbReference>
<dbReference type="InterPro" id="IPR051877">
    <property type="entry name" value="Centriole_BasalBody_StrucProt"/>
</dbReference>
<dbReference type="PANTHER" id="PTHR20544:SF1">
    <property type="entry name" value="CENTROSOMAL PROTEIN 135KDA"/>
    <property type="match status" value="1"/>
</dbReference>
<dbReference type="PANTHER" id="PTHR20544">
    <property type="entry name" value="CENTROSOMAL PROTEIN CEP135"/>
    <property type="match status" value="1"/>
</dbReference>
<dbReference type="SUPFAM" id="SSF57997">
    <property type="entry name" value="Tropomyosin"/>
    <property type="match status" value="1"/>
</dbReference>
<reference key="1">
    <citation type="journal article" date="2004" name="Genome Res.">
        <title>The status, quality, and expansion of the NIH full-length cDNA project: the Mammalian Gene Collection (MGC).</title>
        <authorList>
            <consortium name="The MGC Project Team"/>
        </authorList>
    </citation>
    <scope>NUCLEOTIDE SEQUENCE [LARGE SCALE MRNA]</scope>
    <source>
        <strain>C57BL/6J</strain>
        <tissue>Brain</tissue>
    </source>
</reference>
<reference key="2">
    <citation type="journal article" date="2004" name="DNA Res.">
        <title>Prediction of the coding sequences of mouse homologues of KIAA gene: IV. The complete nucleotide sequences of 500 mouse KIAA-homologous cDNAs identified by screening of terminal sequences of cDNA clones randomly sampled from size-fractionated libraries.</title>
        <authorList>
            <person name="Okazaki N."/>
            <person name="Kikuno R."/>
            <person name="Ohara R."/>
            <person name="Inamoto S."/>
            <person name="Koseki H."/>
            <person name="Hiraoka S."/>
            <person name="Saga Y."/>
            <person name="Seino S."/>
            <person name="Nishimura M."/>
            <person name="Kaisho T."/>
            <person name="Hoshino K."/>
            <person name="Kitamura H."/>
            <person name="Nagase T."/>
            <person name="Ohara O."/>
            <person name="Koga H."/>
        </authorList>
    </citation>
    <scope>NUCLEOTIDE SEQUENCE [LARGE SCALE MRNA] OF 16-1140</scope>
    <source>
        <tissue>Pancreatic islet</tissue>
    </source>
</reference>
<reference key="3">
    <citation type="journal article" date="2002" name="J. Cell Biol.">
        <title>Characterization of Cep135, a novel coiled-coil centrosomal protein involved in microtubule organization in mammalian cells.</title>
        <authorList>
            <person name="Ohta T."/>
            <person name="Essner R."/>
            <person name="Ryu J.-H."/>
            <person name="Palazzo R.E."/>
            <person name="Uetake Y."/>
            <person name="Kuriyama R."/>
        </authorList>
    </citation>
    <scope>SUBCELLULAR LOCATION</scope>
</reference>
<reference key="4">
    <citation type="journal article" date="2004" name="Cell Motil. Cytoskeleton">
        <title>Interaction of Cep135 with a p50 dynactin subunit in mammalian centrosomes.</title>
        <authorList>
            <person name="Uetake Y."/>
            <person name="Terada Y."/>
            <person name="Matuliene J."/>
            <person name="Kuriyama R."/>
        </authorList>
    </citation>
    <scope>INTERACTION WITH DCTN2</scope>
</reference>
<reference key="5">
    <citation type="journal article" date="2010" name="Cell">
        <title>A tissue-specific atlas of mouse protein phosphorylation and expression.</title>
        <authorList>
            <person name="Huttlin E.L."/>
            <person name="Jedrychowski M.P."/>
            <person name="Elias J.E."/>
            <person name="Goswami T."/>
            <person name="Rad R."/>
            <person name="Beausoleil S.A."/>
            <person name="Villen J."/>
            <person name="Haas W."/>
            <person name="Sowa M.E."/>
            <person name="Gygi S.P."/>
        </authorList>
    </citation>
    <scope>PHOSPHORYLATION [LARGE SCALE ANALYSIS] AT SER-1130 AND THR-1134</scope>
    <scope>IDENTIFICATION BY MASS SPECTROMETRY [LARGE SCALE ANALYSIS]</scope>
    <source>
        <tissue>Brown adipose tissue</tissue>
        <tissue>Lung</tissue>
        <tissue>Spleen</tissue>
    </source>
</reference>
<name>CP135_MOUSE</name>
<accession>Q6P5D4</accession>
<accession>Q6A030</accession>
<evidence type="ECO:0000250" key="1">
    <source>
        <dbReference type="UniProtKB" id="Q66GS9"/>
    </source>
</evidence>
<evidence type="ECO:0000255" key="2"/>
<evidence type="ECO:0000256" key="3">
    <source>
        <dbReference type="SAM" id="MobiDB-lite"/>
    </source>
</evidence>
<evidence type="ECO:0000269" key="4">
    <source>
    </source>
</evidence>
<evidence type="ECO:0000269" key="5">
    <source>
    </source>
</evidence>
<evidence type="ECO:0000305" key="6"/>
<evidence type="ECO:0007744" key="7">
    <source>
    </source>
</evidence>
<keyword id="KW-0175">Coiled coil</keyword>
<keyword id="KW-0963">Cytoplasm</keyword>
<keyword id="KW-0206">Cytoskeleton</keyword>
<keyword id="KW-1015">Disulfide bond</keyword>
<keyword id="KW-0597">Phosphoprotein</keyword>
<keyword id="KW-1185">Reference proteome</keyword>
<sequence length="1140" mass="133345">MTTAAERKYINIRKRLDQLGYRQTLSVDSLPLVEKLFSDLVHTTESLRQCRLSSGKAEKESANLDFVLEPYKLENTRLNKENNELYLELMKLRECSDKHIKDLKTTLKKCSRETADLKFLNNQYVHKVKVLEKESKAKDEKIQQLQEKNLRAVVQTPGGRKRNIAFRRQRMQIDEPAPPSEVSAYPVPQPEDPYIADLLQVADNRIQELQEEVQQLQEKLAQMEKGVLDYSKQIELREREIQRLSLALDGGCSPDVLSLETRNKTNEKLIAHLNVQVDFLQQANKELEKHIQELMETKETVTTEVVNLSNRNEKLCQELTEIDQLAQRLERHKEQVLETADKELGEAKKEIKRNLCEMRNLEEKMSKLQWELDLSHKEKERLNSELLLKSDLETVVHQLEQEKQRLSKKLQSFAVTERELTLEVERMRLEHGIKRRDKSPSRLDTFLKGIEEERDYYKKELEKLQHLIQRRSCAINYSAREKPPVVKCSEKGDCSTDVHLITRERDELQRMLERFEKYMEDIQSNVKLLTAERDKLNVLYKEAKEELSTLRKESTNSTSPNHLVSCVEKEKERALSELRRITAEKEALREKLKNIQERNAVGKSDLEKTIEHLTYINHQLENEKYELQSKMLMMKETVESLENKSKLQAQKLSHVTGDSSHQKTEMTSLRIVSEQLQRSLDDCQHRLSIKRGELESAQEQIKMLEQKLENLSHRMTVQSEETHAMKKTIGVMDKEKDFLQETVDEKTEKIANLQESLLSKEKVIAQLKVTVAEYETSLNQLQETLTTRDREINSLRRQLDASHKELDDVGKSREISFKENRRLQDDLATMARENQEISLELEAAVQEKEEMKSRVHKYITEVSRWESLMAAKEKENKDLLDRFQMLHSRAEDWEVKAQQAEGENSSVRLELLSIDTERRHLRERVDLLEKEIQEHINAHHAYESQISSMAKAMSQLEEELRRHESEKATMLGDVSSLRELCIKLDSGKDVMTQQLNSKSLELERAVAELENVKSESELLKKQLTNERQTIKNLESLLATNRDKEFQSHLTSHEKDTEIQLLKEKLNLSESKLTTQSRETSMLRTKVTQLQTDYDNLKRQMSNEKYERERAIQEMRRLGLPTSPLSSTLKSPVQTPDHINA</sequence>
<comment type="function">
    <text evidence="1">Centrosomal microtubule-binding protein involved in centriole biogenesis. Acts as a scaffolding protein during early centriole biogenesis. Required for the targeting of centriole satellite proteins to centrosomes such as of PCM1, SSX2IP and CEP290 and recruitment of WRAP73 to centrioles. Also required for centriole-centriole cohesion during interphase by acting as a platform protein for CEP250 at the centriole. Required for the recruitment of CEP295 to the proximal end of new-born centrioles at the centriolar microtubule wall during early S phase in a PLK4-dependent manner (By similarity).</text>
</comment>
<comment type="subunit">
    <text evidence="1 5">Homodimer (By similarity). Interacts with CEP250 (By similarity). Interacts with DCTN2.</text>
</comment>
<comment type="subcellular location">
    <subcellularLocation>
        <location evidence="4">Cytoplasm</location>
        <location evidence="4">Cytoskeleton</location>
        <location evidence="4">Microtubule organizing center</location>
        <location evidence="4">Centrosome</location>
        <location evidence="4">Centriole</location>
    </subcellularLocation>
    <text evidence="1">During centriole biogenesis, it is concentrated within the proximal lumen of both parental centrioles and procentrioles.</text>
</comment>
<comment type="domain">
    <text evidence="1">Coiled-coil domains are critical for microtubule binding via the formation of a two-stranded coiled-coil structure in homodimers.</text>
</comment>
<comment type="similarity">
    <text evidence="6">Belongs to the CEP135/TSGA10 family.</text>
</comment>
<gene>
    <name type="primary">Cep135</name>
    <name type="synonym">Cep4</name>
    <name type="synonym">Kiaa0635</name>
</gene>
<proteinExistence type="evidence at protein level"/>